<feature type="chain" id="PRO_0000326731" description="Acylphosphatase">
    <location>
        <begin position="1"/>
        <end position="97"/>
    </location>
</feature>
<feature type="domain" description="Acylphosphatase-like" evidence="1">
    <location>
        <begin position="3"/>
        <end position="97"/>
    </location>
</feature>
<feature type="active site" evidence="1">
    <location>
        <position position="18"/>
    </location>
</feature>
<feature type="active site" evidence="1">
    <location>
        <position position="36"/>
    </location>
</feature>
<dbReference type="EC" id="3.6.1.7"/>
<dbReference type="EMBL" id="AE005176">
    <property type="protein sequence ID" value="AAK04704.1"/>
    <property type="molecule type" value="Genomic_DNA"/>
</dbReference>
<dbReference type="PIR" id="F86700">
    <property type="entry name" value="F86700"/>
</dbReference>
<dbReference type="RefSeq" id="NP_266762.1">
    <property type="nucleotide sequence ID" value="NC_002662.1"/>
</dbReference>
<dbReference type="RefSeq" id="WP_003129511.1">
    <property type="nucleotide sequence ID" value="NC_002662.1"/>
</dbReference>
<dbReference type="SMR" id="Q9CHW2"/>
<dbReference type="PaxDb" id="272623-L196178"/>
<dbReference type="EnsemblBacteria" id="AAK04704">
    <property type="protein sequence ID" value="AAK04704"/>
    <property type="gene ID" value="L196178"/>
</dbReference>
<dbReference type="KEGG" id="lla:L196178"/>
<dbReference type="PATRIC" id="fig|272623.7.peg.646"/>
<dbReference type="eggNOG" id="COG1254">
    <property type="taxonomic scope" value="Bacteria"/>
</dbReference>
<dbReference type="HOGENOM" id="CLU_141932_2_1_9"/>
<dbReference type="OrthoDB" id="9808093at2"/>
<dbReference type="Proteomes" id="UP000002196">
    <property type="component" value="Chromosome"/>
</dbReference>
<dbReference type="GO" id="GO:0003998">
    <property type="term" value="F:acylphosphatase activity"/>
    <property type="evidence" value="ECO:0007669"/>
    <property type="project" value="UniProtKB-EC"/>
</dbReference>
<dbReference type="Gene3D" id="3.30.70.100">
    <property type="match status" value="1"/>
</dbReference>
<dbReference type="InterPro" id="IPR020456">
    <property type="entry name" value="Acylphosphatase"/>
</dbReference>
<dbReference type="InterPro" id="IPR001792">
    <property type="entry name" value="Acylphosphatase-like_dom"/>
</dbReference>
<dbReference type="InterPro" id="IPR036046">
    <property type="entry name" value="Acylphosphatase-like_dom_sf"/>
</dbReference>
<dbReference type="InterPro" id="IPR017968">
    <property type="entry name" value="Acylphosphatase_CS"/>
</dbReference>
<dbReference type="NCBIfam" id="NF011008">
    <property type="entry name" value="PRK14434.1"/>
    <property type="match status" value="1"/>
</dbReference>
<dbReference type="PANTHER" id="PTHR47268">
    <property type="entry name" value="ACYLPHOSPHATASE"/>
    <property type="match status" value="1"/>
</dbReference>
<dbReference type="PANTHER" id="PTHR47268:SF4">
    <property type="entry name" value="ACYLPHOSPHATASE"/>
    <property type="match status" value="1"/>
</dbReference>
<dbReference type="Pfam" id="PF00708">
    <property type="entry name" value="Acylphosphatase"/>
    <property type="match status" value="1"/>
</dbReference>
<dbReference type="SUPFAM" id="SSF54975">
    <property type="entry name" value="Acylphosphatase/BLUF domain-like"/>
    <property type="match status" value="1"/>
</dbReference>
<dbReference type="PROSITE" id="PS00150">
    <property type="entry name" value="ACYLPHOSPHATASE_1"/>
    <property type="match status" value="1"/>
</dbReference>
<dbReference type="PROSITE" id="PS51160">
    <property type="entry name" value="ACYLPHOSPHATASE_3"/>
    <property type="match status" value="1"/>
</dbReference>
<gene>
    <name type="primary">acyP</name>
    <name type="ordered locus">LL0606</name>
    <name type="ORF">L196178</name>
</gene>
<proteinExistence type="inferred from homology"/>
<accession>Q9CHW2</accession>
<reference key="1">
    <citation type="journal article" date="2001" name="Genome Res.">
        <title>The complete genome sequence of the lactic acid bacterium Lactococcus lactis ssp. lactis IL1403.</title>
        <authorList>
            <person name="Bolotin A."/>
            <person name="Wincker P."/>
            <person name="Mauger S."/>
            <person name="Jaillon O."/>
            <person name="Malarme K."/>
            <person name="Weissenbach J."/>
            <person name="Ehrlich S.D."/>
            <person name="Sorokin A."/>
        </authorList>
    </citation>
    <scope>NUCLEOTIDE SEQUENCE [LARGE SCALE GENOMIC DNA]</scope>
    <source>
        <strain>IL1403</strain>
    </source>
</reference>
<comment type="catalytic activity">
    <reaction>
        <text>an acyl phosphate + H2O = a carboxylate + phosphate + H(+)</text>
        <dbReference type="Rhea" id="RHEA:14965"/>
        <dbReference type="ChEBI" id="CHEBI:15377"/>
        <dbReference type="ChEBI" id="CHEBI:15378"/>
        <dbReference type="ChEBI" id="CHEBI:29067"/>
        <dbReference type="ChEBI" id="CHEBI:43474"/>
        <dbReference type="ChEBI" id="CHEBI:59918"/>
        <dbReference type="EC" id="3.6.1.7"/>
    </reaction>
</comment>
<comment type="similarity">
    <text evidence="2">Belongs to the acylphosphatase family.</text>
</comment>
<organism>
    <name type="scientific">Lactococcus lactis subsp. lactis (strain IL1403)</name>
    <name type="common">Streptococcus lactis</name>
    <dbReference type="NCBI Taxonomy" id="272623"/>
    <lineage>
        <taxon>Bacteria</taxon>
        <taxon>Bacillati</taxon>
        <taxon>Bacillota</taxon>
        <taxon>Bacilli</taxon>
        <taxon>Lactobacillales</taxon>
        <taxon>Streptococcaceae</taxon>
        <taxon>Lactococcus</taxon>
    </lineage>
</organism>
<protein>
    <recommendedName>
        <fullName>Acylphosphatase</fullName>
        <ecNumber>3.6.1.7</ecNumber>
    </recommendedName>
    <alternativeName>
        <fullName>Acylphosphate phosphohydrolase</fullName>
    </alternativeName>
</protein>
<evidence type="ECO:0000255" key="1">
    <source>
        <dbReference type="PROSITE-ProRule" id="PRU00520"/>
    </source>
</evidence>
<evidence type="ECO:0000305" key="2"/>
<sequence length="97" mass="10936">MFKVKMIVSGRVQGVGFRYFVIISARELGILGRVWNNDDGTVEILAQTEDEKKLEEFTAIVRGEKSSKGRLSPFAKVTDVKSSPANFPDFTDFNIKY</sequence>
<keyword id="KW-0378">Hydrolase</keyword>
<keyword id="KW-1185">Reference proteome</keyword>
<name>ACYP_LACLA</name>